<comment type="function">
    <text evidence="1">Involved in the first step of the non-oxidative branch of the pentose phosphate pathway. It catalyzes the reversible conversion of ribose-5-phosphate to ribulose 5-phosphate.</text>
</comment>
<comment type="catalytic activity">
    <reaction evidence="1">
        <text>aldehydo-D-ribose 5-phosphate = D-ribulose 5-phosphate</text>
        <dbReference type="Rhea" id="RHEA:14657"/>
        <dbReference type="ChEBI" id="CHEBI:58121"/>
        <dbReference type="ChEBI" id="CHEBI:58273"/>
        <dbReference type="EC" id="5.3.1.6"/>
    </reaction>
</comment>
<comment type="pathway">
    <text evidence="1">Carbohydrate degradation; pentose phosphate pathway; D-ribose 5-phosphate from D-ribulose 5-phosphate (non-oxidative stage): step 1/1.</text>
</comment>
<comment type="subunit">
    <text evidence="2">Homodimer.</text>
</comment>
<comment type="similarity">
    <text evidence="3">Belongs to the ribose 5-phosphate isomerase family.</text>
</comment>
<feature type="chain" id="PRO_0000438883" description="Ribose-5-phosphate isomerase">
    <location>
        <begin position="1"/>
        <end position="236"/>
    </location>
</feature>
<feature type="active site" description="Proton acceptor" evidence="1">
    <location>
        <position position="106"/>
    </location>
</feature>
<feature type="binding site" evidence="1">
    <location>
        <begin position="27"/>
        <end position="30"/>
    </location>
    <ligand>
        <name>substrate</name>
    </ligand>
</feature>
<feature type="binding site" evidence="1">
    <location>
        <begin position="84"/>
        <end position="87"/>
    </location>
    <ligand>
        <name>substrate</name>
    </ligand>
</feature>
<feature type="binding site" evidence="1">
    <location>
        <begin position="97"/>
        <end position="100"/>
    </location>
    <ligand>
        <name>substrate</name>
    </ligand>
</feature>
<feature type="binding site" evidence="1">
    <location>
        <position position="124"/>
    </location>
    <ligand>
        <name>substrate</name>
    </ligand>
</feature>
<feature type="helix" evidence="7">
    <location>
        <begin position="1"/>
        <end position="16"/>
    </location>
</feature>
<feature type="strand" evidence="7">
    <location>
        <begin position="22"/>
        <end position="25"/>
    </location>
</feature>
<feature type="turn" evidence="7">
    <location>
        <begin position="29"/>
        <end position="31"/>
    </location>
</feature>
<feature type="helix" evidence="7">
    <location>
        <begin position="32"/>
        <end position="43"/>
    </location>
</feature>
<feature type="strand" evidence="7">
    <location>
        <begin position="51"/>
        <end position="56"/>
    </location>
</feature>
<feature type="helix" evidence="7">
    <location>
        <begin position="57"/>
        <end position="66"/>
    </location>
</feature>
<feature type="strand" evidence="7">
    <location>
        <begin position="79"/>
        <end position="84"/>
    </location>
</feature>
<feature type="strand" evidence="7">
    <location>
        <begin position="87"/>
        <end position="89"/>
    </location>
</feature>
<feature type="helix" evidence="7">
    <location>
        <begin position="103"/>
        <end position="111"/>
    </location>
</feature>
<feature type="strand" evidence="7">
    <location>
        <begin position="116"/>
        <end position="121"/>
    </location>
</feature>
<feature type="helix" evidence="7">
    <location>
        <begin position="122"/>
        <end position="124"/>
    </location>
</feature>
<feature type="strand" evidence="7">
    <location>
        <begin position="136"/>
        <end position="140"/>
    </location>
</feature>
<feature type="helix" evidence="7">
    <location>
        <begin position="145"/>
        <end position="152"/>
    </location>
</feature>
<feature type="turn" evidence="7">
    <location>
        <begin position="156"/>
        <end position="160"/>
    </location>
</feature>
<feature type="strand" evidence="7">
    <location>
        <begin position="162"/>
        <end position="165"/>
    </location>
</feature>
<feature type="strand" evidence="7">
    <location>
        <begin position="180"/>
        <end position="185"/>
    </location>
</feature>
<feature type="helix" evidence="7">
    <location>
        <begin position="193"/>
        <end position="201"/>
    </location>
</feature>
<feature type="strand" evidence="7">
    <location>
        <begin position="206"/>
        <end position="212"/>
    </location>
</feature>
<feature type="strand" evidence="7">
    <location>
        <begin position="217"/>
        <end position="222"/>
    </location>
</feature>
<feature type="strand" evidence="7">
    <location>
        <begin position="228"/>
        <end position="232"/>
    </location>
</feature>
<evidence type="ECO:0000250" key="1">
    <source>
        <dbReference type="UniProtKB" id="P0A7Z0"/>
    </source>
</evidence>
<evidence type="ECO:0000269" key="2">
    <source>
    </source>
</evidence>
<evidence type="ECO:0000305" key="3"/>
<evidence type="ECO:0000312" key="4">
    <source>
        <dbReference type="EMBL" id="CAD51510.1"/>
    </source>
</evidence>
<evidence type="ECO:0000312" key="5">
    <source>
        <dbReference type="Proteomes" id="UP000001450"/>
    </source>
</evidence>
<evidence type="ECO:0007744" key="6">
    <source>
        <dbReference type="PDB" id="2F8M"/>
    </source>
</evidence>
<evidence type="ECO:0007829" key="7">
    <source>
        <dbReference type="PDB" id="2F8M"/>
    </source>
</evidence>
<sequence length="236" mass="26205">MDSLKKIVAYKAVDEYVQSNMTIGLGTGSTVFYVLERIDNLLKSGKLKDVVCIPTSIDTELKARKLGIPLTTLEKHSNIDITIDGTDEIDLNLNLIKGRGGALVREKLVASSSSLFIIIGDESKLCTNGLGMTGAVPIEILTFGYEKIIENLLKIYTLKGCTYKIRKRNGEIFITDNKNYIVDFFFTEPIQDLLETCTRIKMTTGVVDHGIFVNMTNVALISKHDGTVLTLNKKYE</sequence>
<reference evidence="5" key="1">
    <citation type="journal article" date="2002" name="Nature">
        <title>Genome sequence of the human malaria parasite Plasmodium falciparum.</title>
        <authorList>
            <person name="Gardner M.J."/>
            <person name="Hall N."/>
            <person name="Fung E."/>
            <person name="White O."/>
            <person name="Berriman M."/>
            <person name="Hyman R.W."/>
            <person name="Carlton J.M."/>
            <person name="Pain A."/>
            <person name="Nelson K.E."/>
            <person name="Bowman S."/>
            <person name="Paulsen I.T."/>
            <person name="James K.D."/>
            <person name="Eisen J.A."/>
            <person name="Rutherford K.M."/>
            <person name="Salzberg S.L."/>
            <person name="Craig A."/>
            <person name="Kyes S."/>
            <person name="Chan M.-S."/>
            <person name="Nene V."/>
            <person name="Shallom S.J."/>
            <person name="Suh B."/>
            <person name="Peterson J."/>
            <person name="Angiuoli S."/>
            <person name="Pertea M."/>
            <person name="Allen J."/>
            <person name="Selengut J."/>
            <person name="Haft D."/>
            <person name="Mather M.W."/>
            <person name="Vaidya A.B."/>
            <person name="Martin D.M.A."/>
            <person name="Fairlamb A.H."/>
            <person name="Fraunholz M.J."/>
            <person name="Roos D.S."/>
            <person name="Ralph S.A."/>
            <person name="McFadden G.I."/>
            <person name="Cummings L.M."/>
            <person name="Subramanian G.M."/>
            <person name="Mungall C."/>
            <person name="Venter J.C."/>
            <person name="Carucci D.J."/>
            <person name="Hoffman S.L."/>
            <person name="Newbold C."/>
            <person name="Davis R.W."/>
            <person name="Fraser C.M."/>
            <person name="Barrell B.G."/>
        </authorList>
    </citation>
    <scope>NUCLEOTIDE SEQUENCE [LARGE SCALE GENOMIC DNA]</scope>
    <source>
        <strain evidence="5">3D7</strain>
    </source>
</reference>
<reference evidence="4 5" key="2">
    <citation type="journal article" date="2002" name="Nature">
        <title>Sequence of Plasmodium falciparum chromosomes 1, 3-9 and 13.</title>
        <authorList>
            <person name="Hall N."/>
            <person name="Pain A."/>
            <person name="Berriman M."/>
            <person name="Churcher C.M."/>
            <person name="Harris B."/>
            <person name="Harris D."/>
            <person name="Mungall K.L."/>
            <person name="Bowman S."/>
            <person name="Atkin R."/>
            <person name="Baker S."/>
            <person name="Barron A."/>
            <person name="Brooks K."/>
            <person name="Buckee C.O."/>
            <person name="Burrows C."/>
            <person name="Cherevach I."/>
            <person name="Chillingworth C."/>
            <person name="Chillingworth T."/>
            <person name="Christodoulou Z."/>
            <person name="Clark L."/>
            <person name="Clark R."/>
            <person name="Corton C."/>
            <person name="Cronin A."/>
            <person name="Davies R.M."/>
            <person name="Davis P."/>
            <person name="Dear P."/>
            <person name="Dearden F."/>
            <person name="Doggett J."/>
            <person name="Feltwell T."/>
            <person name="Goble A."/>
            <person name="Goodhead I."/>
            <person name="Gwilliam R."/>
            <person name="Hamlin N."/>
            <person name="Hance Z."/>
            <person name="Harper D."/>
            <person name="Hauser H."/>
            <person name="Hornsby T."/>
            <person name="Holroyd S."/>
            <person name="Horrocks P."/>
            <person name="Humphray S."/>
            <person name="Jagels K."/>
            <person name="James K.D."/>
            <person name="Johnson D."/>
            <person name="Kerhornou A."/>
            <person name="Knights A."/>
            <person name="Konfortov B."/>
            <person name="Kyes S."/>
            <person name="Larke N."/>
            <person name="Lawson D."/>
            <person name="Lennard N."/>
            <person name="Line A."/>
            <person name="Maddison M."/>
            <person name="Mclean J."/>
            <person name="Mooney P."/>
            <person name="Moule S."/>
            <person name="Murphy L."/>
            <person name="Oliver K."/>
            <person name="Ormond D."/>
            <person name="Price C."/>
            <person name="Quail M.A."/>
            <person name="Rabbinowitsch E."/>
            <person name="Rajandream M.A."/>
            <person name="Rutter S."/>
            <person name="Rutherford K.M."/>
            <person name="Sanders M."/>
            <person name="Simmonds M."/>
            <person name="Seeger K."/>
            <person name="Sharp S."/>
            <person name="Smith R."/>
            <person name="Squares R."/>
            <person name="Squares S."/>
            <person name="Stevens K."/>
            <person name="Taylor K."/>
            <person name="Tivey A."/>
            <person name="Unwin L."/>
            <person name="Whitehead S."/>
            <person name="Woodward J.R."/>
            <person name="Sulston J.E."/>
            <person name="Craig A."/>
            <person name="Newbold C."/>
            <person name="Barrell B.G."/>
        </authorList>
    </citation>
    <scope>NUCLEOTIDE SEQUENCE [LARGE SCALE GENOMIC DNA]</scope>
    <source>
        <strain evidence="5">3D7</strain>
    </source>
</reference>
<reference evidence="6" key="3">
    <citation type="journal article" date="2006" name="Acta Crystallogr. F Struct. Biol. Commun.">
        <title>Structure of ribose 5-phosphate isomerase from Plasmodium falciparum.</title>
        <authorList>
            <person name="Holmes M.A."/>
            <person name="Buckner F.S."/>
            <person name="Van Voorhis W.C."/>
            <person name="Verlinde C.L."/>
            <person name="Mehlin C."/>
            <person name="Boni E."/>
            <person name="DeTitta G."/>
            <person name="Luft J."/>
            <person name="Lauricella A."/>
            <person name="Anderson L."/>
            <person name="Kalyuzhniy O."/>
            <person name="Zucker F."/>
            <person name="Schoenfeld L.W."/>
            <person name="Earnest T.N."/>
            <person name="Hol W.G."/>
            <person name="Merritt E.A."/>
        </authorList>
    </citation>
    <scope>X-RAY CRYSTALLOGRAPHY (2.09 ANGSTROMS) IN COMPLEX WITH PHOSPHATE</scope>
    <scope>SUBUNIT</scope>
</reference>
<protein>
    <recommendedName>
        <fullName>Ribose-5-phosphate isomerase</fullName>
        <ecNumber evidence="1">5.3.1.6</ecNumber>
    </recommendedName>
</protein>
<name>RPIA_PLAF7</name>
<proteinExistence type="evidence at protein level"/>
<dbReference type="EC" id="5.3.1.6" evidence="1"/>
<dbReference type="EMBL" id="AL844504">
    <property type="protein sequence ID" value="CAD51510.1"/>
    <property type="molecule type" value="Genomic_DNA"/>
</dbReference>
<dbReference type="RefSeq" id="XP_001351703.1">
    <property type="nucleotide sequence ID" value="XM_001351667.1"/>
</dbReference>
<dbReference type="PDB" id="2F8M">
    <property type="method" value="X-ray"/>
    <property type="resolution" value="2.09 A"/>
    <property type="chains" value="A/B=1-236"/>
</dbReference>
<dbReference type="PDBsum" id="2F8M"/>
<dbReference type="SMR" id="Q8I3W2"/>
<dbReference type="FunCoup" id="Q8I3W2">
    <property type="interactions" value="275"/>
</dbReference>
<dbReference type="STRING" id="36329.Q8I3W2"/>
<dbReference type="PaxDb" id="5833-PFE0730c"/>
<dbReference type="EnsemblProtists" id="CAD51510">
    <property type="protein sequence ID" value="CAD51510"/>
    <property type="gene ID" value="PF3D7_0514600"/>
</dbReference>
<dbReference type="GeneID" id="812960"/>
<dbReference type="KEGG" id="pfa:PF3D7_0514600"/>
<dbReference type="VEuPathDB" id="PlasmoDB:PF3D7_0514600"/>
<dbReference type="HOGENOM" id="CLU_056590_1_0_1"/>
<dbReference type="InParanoid" id="Q8I3W2"/>
<dbReference type="OMA" id="ACHVQEK"/>
<dbReference type="OrthoDB" id="1555531at2759"/>
<dbReference type="PhylomeDB" id="Q8I3W2"/>
<dbReference type="UniPathway" id="UPA00115">
    <property type="reaction ID" value="UER00412"/>
</dbReference>
<dbReference type="EvolutionaryTrace" id="Q8I3W2"/>
<dbReference type="Proteomes" id="UP000001450">
    <property type="component" value="Chromosome 5"/>
</dbReference>
<dbReference type="GO" id="GO:0004751">
    <property type="term" value="F:ribose-5-phosphate isomerase activity"/>
    <property type="evidence" value="ECO:0000250"/>
    <property type="project" value="GeneDB"/>
</dbReference>
<dbReference type="GO" id="GO:0009052">
    <property type="term" value="P:pentose-phosphate shunt, non-oxidative branch"/>
    <property type="evidence" value="ECO:0000250"/>
    <property type="project" value="GeneDB"/>
</dbReference>
<dbReference type="CDD" id="cd01398">
    <property type="entry name" value="RPI_A"/>
    <property type="match status" value="1"/>
</dbReference>
<dbReference type="FunFam" id="3.40.50.1360:FF:000001">
    <property type="entry name" value="Ribose-5-phosphate isomerase A"/>
    <property type="match status" value="1"/>
</dbReference>
<dbReference type="Gene3D" id="3.30.70.260">
    <property type="match status" value="1"/>
</dbReference>
<dbReference type="Gene3D" id="3.40.50.1360">
    <property type="match status" value="1"/>
</dbReference>
<dbReference type="InterPro" id="IPR037171">
    <property type="entry name" value="NagB/RpiA_transferase-like"/>
</dbReference>
<dbReference type="InterPro" id="IPR050262">
    <property type="entry name" value="Ribose-5P_isomerase"/>
</dbReference>
<dbReference type="InterPro" id="IPR004788">
    <property type="entry name" value="Ribose5P_isomerase_type_A"/>
</dbReference>
<dbReference type="NCBIfam" id="NF001924">
    <property type="entry name" value="PRK00702.1"/>
    <property type="match status" value="1"/>
</dbReference>
<dbReference type="NCBIfam" id="TIGR00021">
    <property type="entry name" value="rpiA"/>
    <property type="match status" value="1"/>
</dbReference>
<dbReference type="PANTHER" id="PTHR43748">
    <property type="entry name" value="RIBOSE-5-PHOSPHATE ISOMERASE 3, CHLOROPLASTIC-RELATED"/>
    <property type="match status" value="1"/>
</dbReference>
<dbReference type="PANTHER" id="PTHR43748:SF3">
    <property type="entry name" value="RIBOSE-5-PHOSPHATE ISOMERASE 3, CHLOROPLASTIC-RELATED"/>
    <property type="match status" value="1"/>
</dbReference>
<dbReference type="Pfam" id="PF06026">
    <property type="entry name" value="Rib_5-P_isom_A"/>
    <property type="match status" value="1"/>
</dbReference>
<dbReference type="SUPFAM" id="SSF75445">
    <property type="entry name" value="D-ribose-5-phosphate isomerase (RpiA), lid domain"/>
    <property type="match status" value="1"/>
</dbReference>
<dbReference type="SUPFAM" id="SSF100950">
    <property type="entry name" value="NagB/RpiA/CoA transferase-like"/>
    <property type="match status" value="1"/>
</dbReference>
<organism evidence="5">
    <name type="scientific">Plasmodium falciparum (isolate 3D7)</name>
    <dbReference type="NCBI Taxonomy" id="36329"/>
    <lineage>
        <taxon>Eukaryota</taxon>
        <taxon>Sar</taxon>
        <taxon>Alveolata</taxon>
        <taxon>Apicomplexa</taxon>
        <taxon>Aconoidasida</taxon>
        <taxon>Haemosporida</taxon>
        <taxon>Plasmodiidae</taxon>
        <taxon>Plasmodium</taxon>
        <taxon>Plasmodium (Laverania)</taxon>
    </lineage>
</organism>
<gene>
    <name evidence="4" type="ORF">PF3D7_0514600</name>
</gene>
<accession>Q8I3W2</accession>
<keyword id="KW-0002">3D-structure</keyword>
<keyword id="KW-0413">Isomerase</keyword>
<keyword id="KW-1185">Reference proteome</keyword>